<gene>
    <name evidence="3" type="primary">POT1C</name>
    <name evidence="5" type="ordered locus">At2g04395</name>
    <name type="ORF">T1O3</name>
</gene>
<proteinExistence type="evidence at protein level"/>
<evidence type="ECO:0000250" key="1">
    <source>
        <dbReference type="UniProtKB" id="Q56Y52"/>
    </source>
</evidence>
<evidence type="ECO:0000269" key="2">
    <source>
    </source>
</evidence>
<evidence type="ECO:0000303" key="3">
    <source>
    </source>
</evidence>
<evidence type="ECO:0000305" key="4"/>
<evidence type="ECO:0000312" key="5">
    <source>
        <dbReference type="Araport" id="AT2G04395"/>
    </source>
</evidence>
<dbReference type="EMBL" id="AC006951">
    <property type="status" value="NOT_ANNOTATED_CDS"/>
    <property type="molecule type" value="Genomic_DNA"/>
</dbReference>
<dbReference type="EMBL" id="CP002685">
    <property type="protein sequence ID" value="AEC05830.2"/>
    <property type="molecule type" value="Genomic_DNA"/>
</dbReference>
<dbReference type="EMBL" id="AY464640">
    <property type="status" value="NOT_ANNOTATED_CDS"/>
    <property type="molecule type" value="mRNA"/>
</dbReference>
<dbReference type="EMBL" id="BN000975">
    <property type="protein sequence ID" value="CAL36192.1"/>
    <property type="status" value="ALT_SEQ"/>
    <property type="molecule type" value="mRNA"/>
</dbReference>
<dbReference type="RefSeq" id="NP_001318197.1">
    <property type="nucleotide sequence ID" value="NM_001335231.1"/>
</dbReference>
<dbReference type="SMR" id="A9JTY4"/>
<dbReference type="STRING" id="3702.A9JTY4"/>
<dbReference type="PaxDb" id="3702-AT2G04395.1"/>
<dbReference type="EnsemblPlants" id="AT2G04395.1">
    <property type="protein sequence ID" value="AT2G04395.1"/>
    <property type="gene ID" value="AT2G04395"/>
</dbReference>
<dbReference type="GeneID" id="814979"/>
<dbReference type="Gramene" id="AT2G04395.1">
    <property type="protein sequence ID" value="AT2G04395.1"/>
    <property type="gene ID" value="AT2G04395"/>
</dbReference>
<dbReference type="KEGG" id="ath:AT2G04395"/>
<dbReference type="Araport" id="AT2G04395"/>
<dbReference type="TAIR" id="AT2G04395">
    <property type="gene designation" value="POT1C"/>
</dbReference>
<dbReference type="eggNOG" id="KOG4757">
    <property type="taxonomic scope" value="Eukaryota"/>
</dbReference>
<dbReference type="HOGENOM" id="CLU_1671733_0_0_1"/>
<dbReference type="InParanoid" id="A9JTY4"/>
<dbReference type="PRO" id="PR:A9JTY4"/>
<dbReference type="Proteomes" id="UP000006548">
    <property type="component" value="Chromosome 2"/>
</dbReference>
<dbReference type="ExpressionAtlas" id="A9JTY4">
    <property type="expression patterns" value="baseline and differential"/>
</dbReference>
<dbReference type="GO" id="GO:0000781">
    <property type="term" value="C:chromosome, telomeric region"/>
    <property type="evidence" value="ECO:0007669"/>
    <property type="project" value="UniProtKB-SubCell"/>
</dbReference>
<dbReference type="GO" id="GO:0005634">
    <property type="term" value="C:nucleus"/>
    <property type="evidence" value="ECO:0007669"/>
    <property type="project" value="UniProtKB-SubCell"/>
</dbReference>
<dbReference type="GO" id="GO:0043047">
    <property type="term" value="F:single-stranded telomeric DNA binding"/>
    <property type="evidence" value="ECO:0007669"/>
    <property type="project" value="InterPro"/>
</dbReference>
<dbReference type="GO" id="GO:0000723">
    <property type="term" value="P:telomere maintenance"/>
    <property type="evidence" value="ECO:0007669"/>
    <property type="project" value="InterPro"/>
</dbReference>
<dbReference type="CDD" id="cd04497">
    <property type="entry name" value="hPOT1_OB1_like"/>
    <property type="match status" value="1"/>
</dbReference>
<dbReference type="Gene3D" id="2.40.50.140">
    <property type="entry name" value="Nucleic acid-binding proteins"/>
    <property type="match status" value="1"/>
</dbReference>
<dbReference type="InterPro" id="IPR012340">
    <property type="entry name" value="NA-bd_OB-fold"/>
</dbReference>
<dbReference type="InterPro" id="IPR028389">
    <property type="entry name" value="POT1"/>
</dbReference>
<dbReference type="InterPro" id="IPR011564">
    <property type="entry name" value="Telomer_end-bd_POT1/Cdc13"/>
</dbReference>
<dbReference type="PANTHER" id="PTHR14513">
    <property type="entry name" value="PROTECTION OF TELOMERES 1"/>
    <property type="match status" value="1"/>
</dbReference>
<dbReference type="PANTHER" id="PTHR14513:SF0">
    <property type="entry name" value="PROTECTION OF TELOMERES PROTEIN 1"/>
    <property type="match status" value="1"/>
</dbReference>
<dbReference type="Pfam" id="PF02765">
    <property type="entry name" value="POT1"/>
    <property type="match status" value="1"/>
</dbReference>
<dbReference type="SMART" id="SM00976">
    <property type="entry name" value="Telo_bind"/>
    <property type="match status" value="1"/>
</dbReference>
<dbReference type="SUPFAM" id="SSF50249">
    <property type="entry name" value="Nucleic acid-binding proteins"/>
    <property type="match status" value="1"/>
</dbReference>
<organism>
    <name type="scientific">Arabidopsis thaliana</name>
    <name type="common">Mouse-ear cress</name>
    <dbReference type="NCBI Taxonomy" id="3702"/>
    <lineage>
        <taxon>Eukaryota</taxon>
        <taxon>Viridiplantae</taxon>
        <taxon>Streptophyta</taxon>
        <taxon>Embryophyta</taxon>
        <taxon>Tracheophyta</taxon>
        <taxon>Spermatophyta</taxon>
        <taxon>Magnoliopsida</taxon>
        <taxon>eudicotyledons</taxon>
        <taxon>Gunneridae</taxon>
        <taxon>Pentapetalae</taxon>
        <taxon>rosids</taxon>
        <taxon>malvids</taxon>
        <taxon>Brassicales</taxon>
        <taxon>Brassicaceae</taxon>
        <taxon>Camelineae</taxon>
        <taxon>Arabidopsis</taxon>
    </lineage>
</organism>
<feature type="chain" id="PRO_0000416959" description="Protection of telomeres protein 1c">
    <location>
        <begin position="1"/>
        <end position="144"/>
    </location>
</feature>
<feature type="mutagenesis site" description="No effect on affinity binding to single-stranded telomeric DNA." evidence="2">
    <original>Y</original>
    <variation>F</variation>
    <location>
        <position position="65"/>
    </location>
</feature>
<feature type="sequence conflict" description="In Ref. 3; AY464640." evidence="4" ref="3">
    <original>D</original>
    <variation>E</variation>
    <location>
        <position position="6"/>
    </location>
</feature>
<feature type="sequence conflict" description="In Ref. 3; AY464640." evidence="4" ref="3">
    <original>E</original>
    <variation>Q</variation>
    <location>
        <position position="23"/>
    </location>
</feature>
<feature type="sequence conflict" description="In Ref. 3; AY464640." evidence="4" ref="3">
    <original>YSR</original>
    <variation>FSK</variation>
    <location>
        <begin position="65"/>
        <end position="67"/>
    </location>
</feature>
<feature type="sequence conflict" description="In Ref. 3; AY464640." evidence="4" ref="3">
    <original>M</original>
    <variation>I</variation>
    <location>
        <position position="81"/>
    </location>
</feature>
<feature type="sequence conflict" description="In Ref. 3; AY464640." evidence="4" ref="3">
    <original>K</original>
    <variation>E</variation>
    <location>
        <position position="96"/>
    </location>
</feature>
<keyword id="KW-0158">Chromosome</keyword>
<keyword id="KW-0238">DNA-binding</keyword>
<keyword id="KW-0539">Nucleus</keyword>
<keyword id="KW-1185">Reference proteome</keyword>
<keyword id="KW-0779">Telomere</keyword>
<protein>
    <recommendedName>
        <fullName evidence="3">Protection of telomeres protein 1c</fullName>
        <shortName evidence="3">AtPOT1c</shortName>
    </recommendedName>
    <alternativeName>
        <fullName evidence="4">Protection of telomeres protein 3</fullName>
    </alternativeName>
</protein>
<comment type="function">
    <text evidence="2">Binds specifically single-stranded telomeric DNA with weak affinity (PubMed:31134349). Has probably no function in the regulation of telomere length (PubMed:31134349).</text>
</comment>
<comment type="subcellular location">
    <subcellularLocation>
        <location evidence="1">Nucleus</location>
    </subcellularLocation>
    <subcellularLocation>
        <location evidence="1">Chromosome</location>
        <location evidence="1">Telomere</location>
    </subcellularLocation>
</comment>
<comment type="tissue specificity">
    <text evidence="2">Expressed at extremely low levels at the limit of detection.</text>
</comment>
<comment type="disruption phenotype">
    <text evidence="2">No visible phenotype under normal growth conditions.</text>
</comment>
<comment type="miscellaneous">
    <text evidence="2">POT1C is a highly divergent POT1 gene, which harbors multiple deletions within its gene body, and insertions of transposable elements within its promoter that probably silence permanentely the gene (PubMed:31134349). Therefore, it is probably a non-functional gene (PubMed:31134349).</text>
</comment>
<comment type="similarity">
    <text evidence="4">Belongs to the telombin family.</text>
</comment>
<comment type="sequence caution" evidence="4">
    <conflict type="miscellaneous discrepancy">
        <sequence resource="EMBL-CDS" id="CAL36192"/>
    </conflict>
    <text>Intron retention.</text>
</comment>
<name>POT1C_ARATH</name>
<accession>A9JTY4</accession>
<sequence>MAKKRDSPKLIKIKDAIKLINQEVSLIGIVLEQREPKQCRNNDWICTLRIIDDTYPSPGLTVNVYSRTLEQLPQIKNHDDMILFTRIKMQTFDSGKRVNAACSRWVSSFALFEGEDLILHADEDTSAVFVWDGTDAPPASILAK</sequence>
<reference key="1">
    <citation type="journal article" date="1999" name="Nature">
        <title>Sequence and analysis of chromosome 2 of the plant Arabidopsis thaliana.</title>
        <authorList>
            <person name="Lin X."/>
            <person name="Kaul S."/>
            <person name="Rounsley S.D."/>
            <person name="Shea T.P."/>
            <person name="Benito M.-I."/>
            <person name="Town C.D."/>
            <person name="Fujii C.Y."/>
            <person name="Mason T.M."/>
            <person name="Bowman C.L."/>
            <person name="Barnstead M.E."/>
            <person name="Feldblyum T.V."/>
            <person name="Buell C.R."/>
            <person name="Ketchum K.A."/>
            <person name="Lee J.J."/>
            <person name="Ronning C.M."/>
            <person name="Koo H.L."/>
            <person name="Moffat K.S."/>
            <person name="Cronin L.A."/>
            <person name="Shen M."/>
            <person name="Pai G."/>
            <person name="Van Aken S."/>
            <person name="Umayam L."/>
            <person name="Tallon L.J."/>
            <person name="Gill J.E."/>
            <person name="Adams M.D."/>
            <person name="Carrera A.J."/>
            <person name="Creasy T.H."/>
            <person name="Goodman H.M."/>
            <person name="Somerville C.R."/>
            <person name="Copenhaver G.P."/>
            <person name="Preuss D."/>
            <person name="Nierman W.C."/>
            <person name="White O."/>
            <person name="Eisen J.A."/>
            <person name="Salzberg S.L."/>
            <person name="Fraser C.M."/>
            <person name="Venter J.C."/>
        </authorList>
    </citation>
    <scope>NUCLEOTIDE SEQUENCE [LARGE SCALE GENOMIC DNA]</scope>
    <source>
        <strain>cv. Columbia</strain>
    </source>
</reference>
<reference key="2">
    <citation type="journal article" date="2017" name="Plant J.">
        <title>Araport11: a complete reannotation of the Arabidopsis thaliana reference genome.</title>
        <authorList>
            <person name="Cheng C.Y."/>
            <person name="Krishnakumar V."/>
            <person name="Chan A.P."/>
            <person name="Thibaud-Nissen F."/>
            <person name="Schobel S."/>
            <person name="Town C.D."/>
        </authorList>
    </citation>
    <scope>GENOME REANNOTATION</scope>
    <source>
        <strain>cv. Columbia</strain>
    </source>
</reference>
<reference key="3">
    <citation type="journal article" date="2002" name="Plant Physiol.">
        <title>Cloning and sequencing of cDNAs for hypothetical genes from chromosome 2 of Arabidopsis.</title>
        <authorList>
            <person name="Xiao Y.-L."/>
            <person name="Malik M."/>
            <person name="Whitelaw C.A."/>
            <person name="Town C.D."/>
        </authorList>
    </citation>
    <scope>NUCLEOTIDE SEQUENCE [LARGE SCALE MRNA] OF 1-113</scope>
    <source>
        <strain>cv. Columbia</strain>
    </source>
</reference>
<reference key="4">
    <citation type="journal article" date="2007" name="J. Cell Sci.">
        <title>Arabidopsis POT1A interacts with TERT-V(I8), an N-terminal splicing variant of telomerase.</title>
        <authorList>
            <person name="Rossignol P."/>
            <person name="Collier S."/>
            <person name="Bush M."/>
            <person name="Shaw P."/>
            <person name="Doonan J.H."/>
        </authorList>
    </citation>
    <scope>IDENTIFICATION</scope>
</reference>
<reference key="5">
    <citation type="journal article" date="2019" name="Plant Cell Rep.">
        <title>Recent emergence and extinction of the protection of telomeres 1c gene in Arabidopsis thaliana.</title>
        <authorList>
            <person name="Kobayashi C.R."/>
            <person name="Castillo-Gonzalez C."/>
            <person name="Survotseva Y."/>
            <person name="Canal E."/>
            <person name="Nelson A.D.L."/>
            <person name="Shippen D.E."/>
        </authorList>
    </citation>
    <scope>FUNCTION</scope>
    <scope>TISSUE SPECIFICITY</scope>
    <scope>DISRUPTION PHENOTYPE</scope>
    <scope>MUTAGENESIS OF TYR-65</scope>
</reference>